<reference key="1">
    <citation type="submission" date="2006-06" db="EMBL/GenBank/DDBJ databases">
        <title>Complete sequence of Pseudoalteromonas atlantica T6c.</title>
        <authorList>
            <consortium name="US DOE Joint Genome Institute"/>
            <person name="Copeland A."/>
            <person name="Lucas S."/>
            <person name="Lapidus A."/>
            <person name="Barry K."/>
            <person name="Detter J.C."/>
            <person name="Glavina del Rio T."/>
            <person name="Hammon N."/>
            <person name="Israni S."/>
            <person name="Dalin E."/>
            <person name="Tice H."/>
            <person name="Pitluck S."/>
            <person name="Saunders E."/>
            <person name="Brettin T."/>
            <person name="Bruce D."/>
            <person name="Han C."/>
            <person name="Tapia R."/>
            <person name="Gilna P."/>
            <person name="Schmutz J."/>
            <person name="Larimer F."/>
            <person name="Land M."/>
            <person name="Hauser L."/>
            <person name="Kyrpides N."/>
            <person name="Kim E."/>
            <person name="Karls A.C."/>
            <person name="Bartlett D."/>
            <person name="Higgins B.P."/>
            <person name="Richardson P."/>
        </authorList>
    </citation>
    <scope>NUCLEOTIDE SEQUENCE [LARGE SCALE GENOMIC DNA]</scope>
    <source>
        <strain>T6c / ATCC BAA-1087</strain>
    </source>
</reference>
<gene>
    <name evidence="1" type="primary">lptD</name>
    <name type="synonym">imp</name>
    <name type="synonym">ostA</name>
    <name type="ordered locus">Patl_3418</name>
</gene>
<protein>
    <recommendedName>
        <fullName evidence="1">LPS-assembly protein LptD</fullName>
    </recommendedName>
</protein>
<accession>Q15QB4</accession>
<proteinExistence type="inferred from homology"/>
<name>LPTD_PSEA6</name>
<organism>
    <name type="scientific">Pseudoalteromonas atlantica (strain T6c / ATCC BAA-1087)</name>
    <dbReference type="NCBI Taxonomy" id="3042615"/>
    <lineage>
        <taxon>Bacteria</taxon>
        <taxon>Pseudomonadati</taxon>
        <taxon>Pseudomonadota</taxon>
        <taxon>Gammaproteobacteria</taxon>
        <taxon>Alteromonadales</taxon>
        <taxon>Alteromonadaceae</taxon>
        <taxon>Paraglaciecola</taxon>
    </lineage>
</organism>
<sequence>MKPLKLELNPRDFNHYQAAFLPYRMKIKQPLHVLCFSVCSLSAVAQETCPAPANTFVVEKRLPNGQIQVISNMTSIQQDNFAEFEGDVEITNKDSQIIANKAQIDRTTQQLIATGDVSYQNPQLSVTSQKVLLNTQNNRMEIADTQYELTTLNARGQAELLVVDQTQGLELNGVTFSTCPTGQEDWLVHADSITVKPDETRGVARNAFFYVQDIPIFYLPYYSFPVTDARETGLLFPQVGSSSSTGFAYEQPYYLNLDPQYDATITPRYMTKRGLQLKTEFRYLTENNSGQIDIEYLPNDSDSTTNEDRYFYRFTHKGALSDDWEVNVDFNGLSDDNYIVDLGSDYYNSADTHLFRTLGLHYYSDALNVSLQLRDFEILGDHDDTYRALPELKLDYVTDLPAGFKFDIHSELARFDNANGTSPKATRAHIAPTLSLPLENSWGEFLAETSIMHTVYRQEDIEGTDLSRDVSRTLGQAKLYGALVFERQAHWFGDNVTQTLEPRAQYLYTSYEDQSDIGLYDTTRLFNDFAGLFRGQEFTGLDRISDKNQVTLGVTSRIIDEDNREQFKLSLGQIFYLEDNKVTAASKEDDRSALAAELDWRIGSKWLAHSEVQVSTQTDKVERSSVGLEYRLARDKMLQINHRFVRDLSGEQISQLGLTASWPIAQDWYWVGRWYRDIDRHRTIESYTGLQYESCCWALRIVAQRQLTSRFDDDGLQSTDEFDSGIAIQFLFKGIGGDSSGRDMLRDGLFGYRQPYLLD</sequence>
<comment type="function">
    <text evidence="1">Together with LptE, is involved in the assembly of lipopolysaccharide (LPS) at the surface of the outer membrane.</text>
</comment>
<comment type="subunit">
    <text evidence="1">Component of the lipopolysaccharide transport and assembly complex. Interacts with LptE and LptA.</text>
</comment>
<comment type="subcellular location">
    <subcellularLocation>
        <location evidence="1">Cell outer membrane</location>
    </subcellularLocation>
</comment>
<comment type="similarity">
    <text evidence="1">Belongs to the LptD family.</text>
</comment>
<comment type="sequence caution" evidence="2">
    <conflict type="erroneous initiation">
        <sequence resource="EMBL-CDS" id="ABG41924"/>
    </conflict>
</comment>
<feature type="signal peptide" evidence="1">
    <location>
        <begin position="1"/>
        <end position="45"/>
    </location>
</feature>
<feature type="chain" id="PRO_5000125743" description="LPS-assembly protein LptD">
    <location>
        <begin position="46"/>
        <end position="759"/>
    </location>
</feature>
<evidence type="ECO:0000255" key="1">
    <source>
        <dbReference type="HAMAP-Rule" id="MF_01411"/>
    </source>
</evidence>
<evidence type="ECO:0000305" key="2"/>
<dbReference type="EMBL" id="CP000388">
    <property type="protein sequence ID" value="ABG41924.1"/>
    <property type="status" value="ALT_INIT"/>
    <property type="molecule type" value="Genomic_DNA"/>
</dbReference>
<dbReference type="RefSeq" id="WP_232283247.1">
    <property type="nucleotide sequence ID" value="NC_008228.1"/>
</dbReference>
<dbReference type="SMR" id="Q15QB4"/>
<dbReference type="STRING" id="342610.Patl_3418"/>
<dbReference type="KEGG" id="pat:Patl_3418"/>
<dbReference type="eggNOG" id="COG1452">
    <property type="taxonomic scope" value="Bacteria"/>
</dbReference>
<dbReference type="HOGENOM" id="CLU_009039_0_0_6"/>
<dbReference type="Proteomes" id="UP000001981">
    <property type="component" value="Chromosome"/>
</dbReference>
<dbReference type="GO" id="GO:0009279">
    <property type="term" value="C:cell outer membrane"/>
    <property type="evidence" value="ECO:0007669"/>
    <property type="project" value="UniProtKB-SubCell"/>
</dbReference>
<dbReference type="GO" id="GO:1990351">
    <property type="term" value="C:transporter complex"/>
    <property type="evidence" value="ECO:0007669"/>
    <property type="project" value="TreeGrafter"/>
</dbReference>
<dbReference type="GO" id="GO:0043165">
    <property type="term" value="P:Gram-negative-bacterium-type cell outer membrane assembly"/>
    <property type="evidence" value="ECO:0007669"/>
    <property type="project" value="UniProtKB-UniRule"/>
</dbReference>
<dbReference type="GO" id="GO:0015920">
    <property type="term" value="P:lipopolysaccharide transport"/>
    <property type="evidence" value="ECO:0007669"/>
    <property type="project" value="InterPro"/>
</dbReference>
<dbReference type="HAMAP" id="MF_01411">
    <property type="entry name" value="LPS_assembly_LptD"/>
    <property type="match status" value="1"/>
</dbReference>
<dbReference type="InterPro" id="IPR020889">
    <property type="entry name" value="LipoPS_assembly_LptD"/>
</dbReference>
<dbReference type="InterPro" id="IPR050218">
    <property type="entry name" value="LptD"/>
</dbReference>
<dbReference type="InterPro" id="IPR007543">
    <property type="entry name" value="LptD_C"/>
</dbReference>
<dbReference type="InterPro" id="IPR005653">
    <property type="entry name" value="OstA-like_N"/>
</dbReference>
<dbReference type="PANTHER" id="PTHR30189">
    <property type="entry name" value="LPS-ASSEMBLY PROTEIN"/>
    <property type="match status" value="1"/>
</dbReference>
<dbReference type="PANTHER" id="PTHR30189:SF1">
    <property type="entry name" value="LPS-ASSEMBLY PROTEIN LPTD"/>
    <property type="match status" value="1"/>
</dbReference>
<dbReference type="Pfam" id="PF04453">
    <property type="entry name" value="LptD"/>
    <property type="match status" value="1"/>
</dbReference>
<dbReference type="Pfam" id="PF03968">
    <property type="entry name" value="LptD_N"/>
    <property type="match status" value="1"/>
</dbReference>
<keyword id="KW-0998">Cell outer membrane</keyword>
<keyword id="KW-0472">Membrane</keyword>
<keyword id="KW-0732">Signal</keyword>